<accession>Q8Z8R3</accession>
<accession>Q7C8C7</accession>
<gene>
    <name type="primary">allS</name>
    <name type="ordered locus">STY0562</name>
    <name type="ordered locus">t2346</name>
</gene>
<proteinExistence type="inferred from homology"/>
<sequence length="308" mass="34259">MFDPETLRTFISVAETGSFSKAAERLCKTTATTSYRIKLLEENTGVGLFFRTTRSVSLTAAGSHLLSQAKDWLAWLDSMPDELRQVNDGVERQVNIVVNNLLYSPQAVASLLSWLNARYPFTQFHFSRQIYMGVWDSLLYEGFSLAIGVTGTEPLANTFMLDPLGSVQWRFVMSADHPLAHVSGPLTEAQLRRFPAINIEDSARTLTKRVAWRLPGQKEIIVPDMETKIAAHLAGVGIGFVPQPLCQTLIDKNELVSCTIPTMRPPSPLSLAWHKFGGGKAVEDIVKLFTQRQPEIAGFLSIFNTVRC</sequence>
<comment type="function">
    <text evidence="1">Positive regulator essential for the expression of allD operon. Binds to the allD promoter (By similarity).</text>
</comment>
<comment type="similarity">
    <text evidence="3">Belongs to the LysR transcriptional regulatory family.</text>
</comment>
<feature type="chain" id="PRO_0000312813" description="HTH-type transcriptional activator AllS">
    <location>
        <begin position="1"/>
        <end position="308"/>
    </location>
</feature>
<feature type="domain" description="HTH lysR-type" evidence="2">
    <location>
        <begin position="2"/>
        <end position="59"/>
    </location>
</feature>
<feature type="DNA-binding region" description="H-T-H motif" evidence="2">
    <location>
        <begin position="19"/>
        <end position="38"/>
    </location>
</feature>
<protein>
    <recommendedName>
        <fullName>HTH-type transcriptional activator AllS</fullName>
    </recommendedName>
</protein>
<dbReference type="EMBL" id="AE014613">
    <property type="protein sequence ID" value="AAO69938.1"/>
    <property type="molecule type" value="Genomic_DNA"/>
</dbReference>
<dbReference type="EMBL" id="AL513382">
    <property type="protein sequence ID" value="CAD04999.1"/>
    <property type="molecule type" value="Genomic_DNA"/>
</dbReference>
<dbReference type="RefSeq" id="NP_455109.1">
    <property type="nucleotide sequence ID" value="NC_003198.1"/>
</dbReference>
<dbReference type="RefSeq" id="WP_000460171.1">
    <property type="nucleotide sequence ID" value="NZ_WSUR01000008.1"/>
</dbReference>
<dbReference type="SMR" id="Q8Z8R3"/>
<dbReference type="STRING" id="220341.gene:17584579"/>
<dbReference type="KEGG" id="stt:t2346"/>
<dbReference type="KEGG" id="sty:STY0562"/>
<dbReference type="PATRIC" id="fig|220341.7.peg.563"/>
<dbReference type="eggNOG" id="COG0583">
    <property type="taxonomic scope" value="Bacteria"/>
</dbReference>
<dbReference type="HOGENOM" id="CLU_039613_35_1_6"/>
<dbReference type="OMA" id="VYMGVWD"/>
<dbReference type="OrthoDB" id="196624at2"/>
<dbReference type="Proteomes" id="UP000000541">
    <property type="component" value="Chromosome"/>
</dbReference>
<dbReference type="Proteomes" id="UP000002670">
    <property type="component" value="Chromosome"/>
</dbReference>
<dbReference type="GO" id="GO:0003677">
    <property type="term" value="F:DNA binding"/>
    <property type="evidence" value="ECO:0007669"/>
    <property type="project" value="UniProtKB-KW"/>
</dbReference>
<dbReference type="GO" id="GO:0003700">
    <property type="term" value="F:DNA-binding transcription factor activity"/>
    <property type="evidence" value="ECO:0007669"/>
    <property type="project" value="InterPro"/>
</dbReference>
<dbReference type="FunFam" id="3.40.190.290:FF:000005">
    <property type="entry name" value="HTH-type transcriptional activator AllS"/>
    <property type="match status" value="1"/>
</dbReference>
<dbReference type="FunFam" id="1.10.10.10:FF:000001">
    <property type="entry name" value="LysR family transcriptional regulator"/>
    <property type="match status" value="1"/>
</dbReference>
<dbReference type="Gene3D" id="3.40.190.290">
    <property type="match status" value="1"/>
</dbReference>
<dbReference type="Gene3D" id="1.10.10.10">
    <property type="entry name" value="Winged helix-like DNA-binding domain superfamily/Winged helix DNA-binding domain"/>
    <property type="match status" value="1"/>
</dbReference>
<dbReference type="InterPro" id="IPR050176">
    <property type="entry name" value="LTTR"/>
</dbReference>
<dbReference type="InterPro" id="IPR005119">
    <property type="entry name" value="LysR_subst-bd"/>
</dbReference>
<dbReference type="InterPro" id="IPR000847">
    <property type="entry name" value="Tscrpt_reg_HTH_LysR"/>
</dbReference>
<dbReference type="InterPro" id="IPR036388">
    <property type="entry name" value="WH-like_DNA-bd_sf"/>
</dbReference>
<dbReference type="InterPro" id="IPR036390">
    <property type="entry name" value="WH_DNA-bd_sf"/>
</dbReference>
<dbReference type="NCBIfam" id="NF007501">
    <property type="entry name" value="PRK10094.1"/>
    <property type="match status" value="1"/>
</dbReference>
<dbReference type="PANTHER" id="PTHR30579:SF0">
    <property type="entry name" value="HTH-TYPE TRANSCRIPTIONAL ACTIVATOR ALLS"/>
    <property type="match status" value="1"/>
</dbReference>
<dbReference type="PANTHER" id="PTHR30579">
    <property type="entry name" value="TRANSCRIPTIONAL REGULATOR"/>
    <property type="match status" value="1"/>
</dbReference>
<dbReference type="Pfam" id="PF00126">
    <property type="entry name" value="HTH_1"/>
    <property type="match status" value="1"/>
</dbReference>
<dbReference type="Pfam" id="PF03466">
    <property type="entry name" value="LysR_substrate"/>
    <property type="match status" value="1"/>
</dbReference>
<dbReference type="SUPFAM" id="SSF53850">
    <property type="entry name" value="Periplasmic binding protein-like II"/>
    <property type="match status" value="1"/>
</dbReference>
<dbReference type="SUPFAM" id="SSF46785">
    <property type="entry name" value="Winged helix' DNA-binding domain"/>
    <property type="match status" value="1"/>
</dbReference>
<dbReference type="PROSITE" id="PS50931">
    <property type="entry name" value="HTH_LYSR"/>
    <property type="match status" value="1"/>
</dbReference>
<keyword id="KW-0010">Activator</keyword>
<keyword id="KW-0238">DNA-binding</keyword>
<keyword id="KW-0804">Transcription</keyword>
<keyword id="KW-0805">Transcription regulation</keyword>
<organism>
    <name type="scientific">Salmonella typhi</name>
    <dbReference type="NCBI Taxonomy" id="90370"/>
    <lineage>
        <taxon>Bacteria</taxon>
        <taxon>Pseudomonadati</taxon>
        <taxon>Pseudomonadota</taxon>
        <taxon>Gammaproteobacteria</taxon>
        <taxon>Enterobacterales</taxon>
        <taxon>Enterobacteriaceae</taxon>
        <taxon>Salmonella</taxon>
    </lineage>
</organism>
<reference key="1">
    <citation type="journal article" date="2001" name="Nature">
        <title>Complete genome sequence of a multiple drug resistant Salmonella enterica serovar Typhi CT18.</title>
        <authorList>
            <person name="Parkhill J."/>
            <person name="Dougan G."/>
            <person name="James K.D."/>
            <person name="Thomson N.R."/>
            <person name="Pickard D."/>
            <person name="Wain J."/>
            <person name="Churcher C.M."/>
            <person name="Mungall K.L."/>
            <person name="Bentley S.D."/>
            <person name="Holden M.T.G."/>
            <person name="Sebaihia M."/>
            <person name="Baker S."/>
            <person name="Basham D."/>
            <person name="Brooks K."/>
            <person name="Chillingworth T."/>
            <person name="Connerton P."/>
            <person name="Cronin A."/>
            <person name="Davis P."/>
            <person name="Davies R.M."/>
            <person name="Dowd L."/>
            <person name="White N."/>
            <person name="Farrar J."/>
            <person name="Feltwell T."/>
            <person name="Hamlin N."/>
            <person name="Haque A."/>
            <person name="Hien T.T."/>
            <person name="Holroyd S."/>
            <person name="Jagels K."/>
            <person name="Krogh A."/>
            <person name="Larsen T.S."/>
            <person name="Leather S."/>
            <person name="Moule S."/>
            <person name="O'Gaora P."/>
            <person name="Parry C."/>
            <person name="Quail M.A."/>
            <person name="Rutherford K.M."/>
            <person name="Simmonds M."/>
            <person name="Skelton J."/>
            <person name="Stevens K."/>
            <person name="Whitehead S."/>
            <person name="Barrell B.G."/>
        </authorList>
    </citation>
    <scope>NUCLEOTIDE SEQUENCE [LARGE SCALE GENOMIC DNA]</scope>
    <source>
        <strain>CT18</strain>
    </source>
</reference>
<reference key="2">
    <citation type="journal article" date="2003" name="J. Bacteriol.">
        <title>Comparative genomics of Salmonella enterica serovar Typhi strains Ty2 and CT18.</title>
        <authorList>
            <person name="Deng W."/>
            <person name="Liou S.-R."/>
            <person name="Plunkett G. III"/>
            <person name="Mayhew G.F."/>
            <person name="Rose D.J."/>
            <person name="Burland V."/>
            <person name="Kodoyianni V."/>
            <person name="Schwartz D.C."/>
            <person name="Blattner F.R."/>
        </authorList>
    </citation>
    <scope>NUCLEOTIDE SEQUENCE [LARGE SCALE GENOMIC DNA]</scope>
    <source>
        <strain>ATCC 700931 / Ty2</strain>
    </source>
</reference>
<evidence type="ECO:0000250" key="1"/>
<evidence type="ECO:0000255" key="2">
    <source>
        <dbReference type="PROSITE-ProRule" id="PRU00253"/>
    </source>
</evidence>
<evidence type="ECO:0000305" key="3"/>
<name>ALLS_SALTI</name>